<name>RS16_ICTPU</name>
<sequence>MPAKGPLQSVQVFGRKKTATAVAHCKRGNGLIKVNGRPLETIEPATLQYKLLEPVLLLGKERFAGVDIRVRVKGGGHVAQVYAIRQSISKALVAYYQKYVDEASKKEIKDILIQYDRTLLVADPRRCESKKFGGPGARARYQKSYR</sequence>
<protein>
    <recommendedName>
        <fullName evidence="2">Small ribosomal subunit protein uS9</fullName>
    </recommendedName>
    <alternativeName>
        <fullName>40S ribosomal protein S16</fullName>
    </alternativeName>
</protein>
<keyword id="KW-0963">Cytoplasm</keyword>
<keyword id="KW-0687">Ribonucleoprotein</keyword>
<keyword id="KW-0689">Ribosomal protein</keyword>
<comment type="function">
    <text evidence="1">Component of the small ribosomal subunit. The ribosome is a large ribonucleoprotein complex responsible for the synthesis of proteins in the cell.</text>
</comment>
<comment type="subunit">
    <text evidence="1">Component of the small ribosomal subunit.</text>
</comment>
<comment type="subcellular location">
    <subcellularLocation>
        <location evidence="1">Cytoplasm</location>
    </subcellularLocation>
</comment>
<comment type="similarity">
    <text evidence="2">Belongs to the universal ribosomal protein uS9 family.</text>
</comment>
<proteinExistence type="evidence at transcript level"/>
<feature type="chain" id="PRO_0000111484" description="Small ribosomal subunit protein uS9">
    <location>
        <begin position="1"/>
        <end position="146"/>
    </location>
</feature>
<accession>Q90YQ7</accession>
<reference key="1">
    <citation type="journal article" date="2002" name="Gene">
        <title>Translational machinery of channel catfish: I. A transcriptomic approach to the analysis of 32 40S ribosomal protein genes and their expression.</title>
        <authorList>
            <person name="Karsi A."/>
            <person name="Patterson A."/>
            <person name="Feng J."/>
            <person name="Liu Z.-J."/>
        </authorList>
    </citation>
    <scope>NUCLEOTIDE SEQUENCE [MRNA]</scope>
</reference>
<organism>
    <name type="scientific">Ictalurus punctatus</name>
    <name type="common">Channel catfish</name>
    <name type="synonym">Silurus punctatus</name>
    <dbReference type="NCBI Taxonomy" id="7998"/>
    <lineage>
        <taxon>Eukaryota</taxon>
        <taxon>Metazoa</taxon>
        <taxon>Chordata</taxon>
        <taxon>Craniata</taxon>
        <taxon>Vertebrata</taxon>
        <taxon>Euteleostomi</taxon>
        <taxon>Actinopterygii</taxon>
        <taxon>Neopterygii</taxon>
        <taxon>Teleostei</taxon>
        <taxon>Ostariophysi</taxon>
        <taxon>Siluriformes</taxon>
        <taxon>Ictaluridae</taxon>
        <taxon>Ictalurus</taxon>
    </lineage>
</organism>
<dbReference type="EMBL" id="AF402825">
    <property type="protein sequence ID" value="AAK95199.1"/>
    <property type="molecule type" value="mRNA"/>
</dbReference>
<dbReference type="SMR" id="Q90YQ7"/>
<dbReference type="STRING" id="7998.ENSIPUP00000036579"/>
<dbReference type="Proteomes" id="UP000221080">
    <property type="component" value="Unplaced"/>
</dbReference>
<dbReference type="GO" id="GO:0022627">
    <property type="term" value="C:cytosolic small ribosomal subunit"/>
    <property type="evidence" value="ECO:0007669"/>
    <property type="project" value="TreeGrafter"/>
</dbReference>
<dbReference type="GO" id="GO:0003723">
    <property type="term" value="F:RNA binding"/>
    <property type="evidence" value="ECO:0007669"/>
    <property type="project" value="TreeGrafter"/>
</dbReference>
<dbReference type="GO" id="GO:0003735">
    <property type="term" value="F:structural constituent of ribosome"/>
    <property type="evidence" value="ECO:0007669"/>
    <property type="project" value="InterPro"/>
</dbReference>
<dbReference type="GO" id="GO:0000462">
    <property type="term" value="P:maturation of SSU-rRNA from tricistronic rRNA transcript (SSU-rRNA, 5.8S rRNA, LSU-rRNA)"/>
    <property type="evidence" value="ECO:0007669"/>
    <property type="project" value="TreeGrafter"/>
</dbReference>
<dbReference type="GO" id="GO:0006412">
    <property type="term" value="P:translation"/>
    <property type="evidence" value="ECO:0007669"/>
    <property type="project" value="InterPro"/>
</dbReference>
<dbReference type="FunFam" id="3.30.230.10:FF:000184">
    <property type="entry name" value="40S ribosomal protein S16"/>
    <property type="match status" value="1"/>
</dbReference>
<dbReference type="Gene3D" id="3.30.230.10">
    <property type="match status" value="1"/>
</dbReference>
<dbReference type="InterPro" id="IPR020568">
    <property type="entry name" value="Ribosomal_Su5_D2-typ_SF"/>
</dbReference>
<dbReference type="InterPro" id="IPR000754">
    <property type="entry name" value="Ribosomal_uS9"/>
</dbReference>
<dbReference type="InterPro" id="IPR020574">
    <property type="entry name" value="Ribosomal_uS9_CS"/>
</dbReference>
<dbReference type="InterPro" id="IPR014721">
    <property type="entry name" value="Ribsml_uS5_D2-typ_fold_subgr"/>
</dbReference>
<dbReference type="PANTHER" id="PTHR21569:SF16">
    <property type="entry name" value="RIBOSOMAL PROTEIN S16"/>
    <property type="match status" value="1"/>
</dbReference>
<dbReference type="PANTHER" id="PTHR21569">
    <property type="entry name" value="RIBOSOMAL PROTEIN S9"/>
    <property type="match status" value="1"/>
</dbReference>
<dbReference type="Pfam" id="PF00380">
    <property type="entry name" value="Ribosomal_S9"/>
    <property type="match status" value="1"/>
</dbReference>
<dbReference type="SUPFAM" id="SSF54211">
    <property type="entry name" value="Ribosomal protein S5 domain 2-like"/>
    <property type="match status" value="1"/>
</dbReference>
<dbReference type="PROSITE" id="PS00360">
    <property type="entry name" value="RIBOSOMAL_S9"/>
    <property type="match status" value="1"/>
</dbReference>
<evidence type="ECO:0000250" key="1">
    <source>
        <dbReference type="UniProtKB" id="P14131"/>
    </source>
</evidence>
<evidence type="ECO:0000305" key="2"/>
<gene>
    <name type="primary">rps16</name>
</gene>